<evidence type="ECO:0000250" key="1">
    <source>
        <dbReference type="UniProtKB" id="Q9Y3C8"/>
    </source>
</evidence>
<evidence type="ECO:0000305" key="2"/>
<comment type="function">
    <text evidence="1">E2-like enzyme which specifically catalyzes the second step in ufmylation. Accepts the ubiquitin-like modifier UFM1 from the E1 enzyme UBA5 and forms an intermediate with UFM1 via a thioester linkage. Ufmylation is involved in various processes, such as ribosome recycling, response to DNA damage, interferon response or reticulophagy (also called ER-phagy).</text>
</comment>
<comment type="subunit">
    <text evidence="1">Interacts with UBA5 (via C-terminus). Interacts with UFL1. Interacts with UFM1.</text>
</comment>
<comment type="similarity">
    <text evidence="2">Belongs to the ubiquitin-conjugating enzyme family. UFC1 subfamily.</text>
</comment>
<gene>
    <name evidence="1" type="primary">ufc1</name>
</gene>
<organism>
    <name type="scientific">Osmerus mordax</name>
    <name type="common">Rainbow smelt</name>
    <name type="synonym">Atherina mordax</name>
    <dbReference type="NCBI Taxonomy" id="8014"/>
    <lineage>
        <taxon>Eukaryota</taxon>
        <taxon>Metazoa</taxon>
        <taxon>Chordata</taxon>
        <taxon>Craniata</taxon>
        <taxon>Vertebrata</taxon>
        <taxon>Euteleostomi</taxon>
        <taxon>Actinopterygii</taxon>
        <taxon>Neopterygii</taxon>
        <taxon>Teleostei</taxon>
        <taxon>Stomiati</taxon>
        <taxon>Osmeriformes</taxon>
        <taxon>Osmeridae</taxon>
        <taxon>Osmerus</taxon>
    </lineage>
</organism>
<sequence length="167" mass="19261">MADDATRKAVSDIPLLKTNSGPRDKELWVQRLREEYLALIKYVENNKVADNDWFRLESNKEGTRWFGKCWYIHDLMKYEFDVEFDIPVTYPTTAPEVAIPELDGKTAKMYRGGKICLTDHFKPLWARNVPKFGLAHLMALGLGPWLAVEIPDLISKGIVVHKEQQNN</sequence>
<accession>C1BKD1</accession>
<dbReference type="EMBL" id="BT075060">
    <property type="protein sequence ID" value="ACO09484.1"/>
    <property type="molecule type" value="mRNA"/>
</dbReference>
<dbReference type="SMR" id="C1BKD1"/>
<dbReference type="GO" id="GO:0005737">
    <property type="term" value="C:cytoplasm"/>
    <property type="evidence" value="ECO:0007669"/>
    <property type="project" value="TreeGrafter"/>
</dbReference>
<dbReference type="GO" id="GO:0061657">
    <property type="term" value="F:UFM1 conjugating enzyme activity"/>
    <property type="evidence" value="ECO:0000250"/>
    <property type="project" value="UniProtKB"/>
</dbReference>
<dbReference type="GO" id="GO:1990592">
    <property type="term" value="P:protein K69-linked ufmylation"/>
    <property type="evidence" value="ECO:0007669"/>
    <property type="project" value="TreeGrafter"/>
</dbReference>
<dbReference type="GO" id="GO:0071569">
    <property type="term" value="P:protein ufmylation"/>
    <property type="evidence" value="ECO:0000250"/>
    <property type="project" value="UniProtKB"/>
</dbReference>
<dbReference type="GO" id="GO:0034976">
    <property type="term" value="P:response to endoplasmic reticulum stress"/>
    <property type="evidence" value="ECO:0000250"/>
    <property type="project" value="UniProtKB"/>
</dbReference>
<dbReference type="GO" id="GO:0061709">
    <property type="term" value="P:reticulophagy"/>
    <property type="evidence" value="ECO:0000250"/>
    <property type="project" value="UniProtKB"/>
</dbReference>
<dbReference type="CDD" id="cd11686">
    <property type="entry name" value="UBCc_UFC1"/>
    <property type="match status" value="1"/>
</dbReference>
<dbReference type="FunFam" id="3.10.110.10:FF:000042">
    <property type="entry name" value="Ubiquitin-fold modifier-conjugating enzyme 1"/>
    <property type="match status" value="1"/>
</dbReference>
<dbReference type="Gene3D" id="3.10.110.10">
    <property type="entry name" value="Ubiquitin Conjugating Enzyme"/>
    <property type="match status" value="1"/>
</dbReference>
<dbReference type="InterPro" id="IPR016135">
    <property type="entry name" value="UBQ-conjugating_enzyme/RWD"/>
</dbReference>
<dbReference type="InterPro" id="IPR014806">
    <property type="entry name" value="Ufc1"/>
</dbReference>
<dbReference type="PANTHER" id="PTHR12921">
    <property type="entry name" value="UBIQUITIN-FOLD MODIFIER-CONJUGATING ENZYME 1"/>
    <property type="match status" value="1"/>
</dbReference>
<dbReference type="PANTHER" id="PTHR12921:SF0">
    <property type="entry name" value="UBIQUITIN-FOLD MODIFIER-CONJUGATING ENZYME 1"/>
    <property type="match status" value="1"/>
</dbReference>
<dbReference type="Pfam" id="PF08694">
    <property type="entry name" value="UFC1"/>
    <property type="match status" value="1"/>
</dbReference>
<dbReference type="PIRSF" id="PIRSF008716">
    <property type="entry name" value="DUF1782"/>
    <property type="match status" value="1"/>
</dbReference>
<dbReference type="SUPFAM" id="SSF54495">
    <property type="entry name" value="UBC-like"/>
    <property type="match status" value="1"/>
</dbReference>
<protein>
    <recommendedName>
        <fullName evidence="2">Ubiquitin-fold modifier-conjugating enzyme 1</fullName>
    </recommendedName>
    <alternativeName>
        <fullName evidence="1">Ufm1-conjugating enzyme 1</fullName>
    </alternativeName>
</protein>
<feature type="chain" id="PRO_0000391957" description="Ubiquitin-fold modifier-conjugating enzyme 1">
    <location>
        <begin position="1"/>
        <end position="167"/>
    </location>
</feature>
<feature type="active site" description="Glycyl thioester intermediate" evidence="1">
    <location>
        <position position="116"/>
    </location>
</feature>
<reference key="1">
    <citation type="submission" date="2009-03" db="EMBL/GenBank/DDBJ databases">
        <title>Osmerus mordax full-length cDNAs.</title>
        <authorList>
            <person name="von Schalburg K."/>
            <person name="Leong J."/>
            <person name="Cooper G."/>
            <person name="Davidson W.S."/>
            <person name="Koop B.F."/>
        </authorList>
    </citation>
    <scope>NUCLEOTIDE SEQUENCE [LARGE SCALE MRNA]</scope>
    <source>
        <tissue>Brain</tissue>
    </source>
</reference>
<name>UFC1_OSMMO</name>
<proteinExistence type="evidence at transcript level"/>
<keyword id="KW-0833">Ubl conjugation pathway</keyword>